<organism>
    <name type="scientific">Mus musculus</name>
    <name type="common">Mouse</name>
    <dbReference type="NCBI Taxonomy" id="10090"/>
    <lineage>
        <taxon>Eukaryota</taxon>
        <taxon>Metazoa</taxon>
        <taxon>Chordata</taxon>
        <taxon>Craniata</taxon>
        <taxon>Vertebrata</taxon>
        <taxon>Euteleostomi</taxon>
        <taxon>Mammalia</taxon>
        <taxon>Eutheria</taxon>
        <taxon>Euarchontoglires</taxon>
        <taxon>Glires</taxon>
        <taxon>Rodentia</taxon>
        <taxon>Myomorpha</taxon>
        <taxon>Muroidea</taxon>
        <taxon>Muridae</taxon>
        <taxon>Murinae</taxon>
        <taxon>Mus</taxon>
        <taxon>Mus</taxon>
    </lineage>
</organism>
<keyword id="KW-0062">Aspartic protease inhibitor</keyword>
<keyword id="KW-1015">Disulfide bond</keyword>
<keyword id="KW-0646">Protease inhibitor</keyword>
<keyword id="KW-1185">Reference proteome</keyword>
<keyword id="KW-0677">Repeat</keyword>
<keyword id="KW-0964">Secreted</keyword>
<keyword id="KW-0722">Serine protease inhibitor</keyword>
<keyword id="KW-0732">Signal</keyword>
<keyword id="KW-0789">Thiol protease inhibitor</keyword>
<accession>Q9DAU7</accession>
<name>WFDC2_MOUSE</name>
<comment type="function">
    <text evidence="1">Broad range protease inhibitor.</text>
</comment>
<comment type="subunit">
    <text evidence="1">Homotrimer; disulfide-linked.</text>
</comment>
<comment type="subcellular location">
    <subcellularLocation>
        <location evidence="1">Secreted</location>
    </subcellularLocation>
</comment>
<gene>
    <name type="primary">Wfdc2</name>
    <name type="synonym">He4</name>
</gene>
<sequence length="174" mass="18032">MPACRLCLLAAGLLLGLLLFTPISATGTDAEKPGECPQLEPITDCVLECTLDKDCADNRKCCQAGCSSVCSKPNGPSEGELSGTDTKLSETGTTTQSAGLDHTTKPPGGQVSTKPPAVTREGLGVREKQGTCPSVDIPKLGLCEDQCQVDSQCSGNMKCCRNGCGKMACTTPKF</sequence>
<proteinExistence type="evidence at protein level"/>
<evidence type="ECO:0000250" key="1"/>
<evidence type="ECO:0000255" key="2"/>
<evidence type="ECO:0000255" key="3">
    <source>
        <dbReference type="PROSITE-ProRule" id="PRU00722"/>
    </source>
</evidence>
<evidence type="ECO:0000256" key="4">
    <source>
        <dbReference type="SAM" id="MobiDB-lite"/>
    </source>
</evidence>
<dbReference type="EMBL" id="AF334269">
    <property type="protein sequence ID" value="AAL73189.1"/>
    <property type="molecule type" value="mRNA"/>
</dbReference>
<dbReference type="EMBL" id="AK005519">
    <property type="protein sequence ID" value="BAB24094.1"/>
    <property type="molecule type" value="mRNA"/>
</dbReference>
<dbReference type="CCDS" id="CCDS17040.1"/>
<dbReference type="RefSeq" id="NP_080599.1">
    <property type="nucleotide sequence ID" value="NM_026323.2"/>
</dbReference>
<dbReference type="SMR" id="Q9DAU7"/>
<dbReference type="STRING" id="10090.ENSMUSP00000017867"/>
<dbReference type="MEROPS" id="I17.004"/>
<dbReference type="PaxDb" id="10090-ENSMUSP00000017867"/>
<dbReference type="PeptideAtlas" id="Q9DAU7"/>
<dbReference type="ProteomicsDB" id="297558"/>
<dbReference type="Antibodypedia" id="27648">
    <property type="antibodies" value="668 antibodies from 43 providers"/>
</dbReference>
<dbReference type="DNASU" id="67701"/>
<dbReference type="Ensembl" id="ENSMUST00000017867.10">
    <property type="protein sequence ID" value="ENSMUSP00000017867.4"/>
    <property type="gene ID" value="ENSMUSG00000017723.12"/>
</dbReference>
<dbReference type="GeneID" id="67701"/>
<dbReference type="KEGG" id="mmu:67701"/>
<dbReference type="UCSC" id="uc008nve.1">
    <property type="organism name" value="mouse"/>
</dbReference>
<dbReference type="AGR" id="MGI:1914951"/>
<dbReference type="CTD" id="10406"/>
<dbReference type="MGI" id="MGI:1914951">
    <property type="gene designation" value="Wfdc2"/>
</dbReference>
<dbReference type="VEuPathDB" id="HostDB:ENSMUSG00000017723"/>
<dbReference type="eggNOG" id="ENOG502SA8J">
    <property type="taxonomic scope" value="Eukaryota"/>
</dbReference>
<dbReference type="GeneTree" id="ENSGT00730000111410"/>
<dbReference type="InParanoid" id="Q9DAU7"/>
<dbReference type="OMA" id="FCGRSCY"/>
<dbReference type="OrthoDB" id="84862at9989"/>
<dbReference type="PhylomeDB" id="Q9DAU7"/>
<dbReference type="BioGRID-ORCS" id="67701">
    <property type="hits" value="0 hits in 78 CRISPR screens"/>
</dbReference>
<dbReference type="ChiTaRS" id="Wfdc2">
    <property type="organism name" value="mouse"/>
</dbReference>
<dbReference type="PRO" id="PR:Q9DAU7"/>
<dbReference type="Proteomes" id="UP000000589">
    <property type="component" value="Chromosome 2"/>
</dbReference>
<dbReference type="RNAct" id="Q9DAU7">
    <property type="molecule type" value="protein"/>
</dbReference>
<dbReference type="Bgee" id="ENSMUSG00000017723">
    <property type="expression patterns" value="Expressed in right lung lobe and 154 other cell types or tissues"/>
</dbReference>
<dbReference type="ExpressionAtlas" id="Q9DAU7">
    <property type="expression patterns" value="baseline and differential"/>
</dbReference>
<dbReference type="GO" id="GO:0005576">
    <property type="term" value="C:extracellular region"/>
    <property type="evidence" value="ECO:0000304"/>
    <property type="project" value="Reactome"/>
</dbReference>
<dbReference type="GO" id="GO:0019828">
    <property type="term" value="F:aspartic-type endopeptidase inhibitor activity"/>
    <property type="evidence" value="ECO:0007669"/>
    <property type="project" value="UniProtKB-KW"/>
</dbReference>
<dbReference type="GO" id="GO:0004869">
    <property type="term" value="F:cysteine-type endopeptidase inhibitor activity"/>
    <property type="evidence" value="ECO:0007669"/>
    <property type="project" value="UniProtKB-KW"/>
</dbReference>
<dbReference type="GO" id="GO:0004867">
    <property type="term" value="F:serine-type endopeptidase inhibitor activity"/>
    <property type="evidence" value="ECO:0007669"/>
    <property type="project" value="UniProtKB-KW"/>
</dbReference>
<dbReference type="CDD" id="cd00199">
    <property type="entry name" value="WAP"/>
    <property type="match status" value="1"/>
</dbReference>
<dbReference type="FunFam" id="4.10.75.10:FF:000001">
    <property type="entry name" value="Anosmin 1"/>
    <property type="match status" value="1"/>
</dbReference>
<dbReference type="Gene3D" id="4.10.75.10">
    <property type="entry name" value="Elafin-like"/>
    <property type="match status" value="2"/>
</dbReference>
<dbReference type="InterPro" id="IPR036645">
    <property type="entry name" value="Elafin-like_sf"/>
</dbReference>
<dbReference type="InterPro" id="IPR008197">
    <property type="entry name" value="WAP_dom"/>
</dbReference>
<dbReference type="InterPro" id="IPR050514">
    <property type="entry name" value="WAP_four-disulfide_core"/>
</dbReference>
<dbReference type="PANTHER" id="PTHR19441:SF34">
    <property type="entry name" value="WAP FOUR-DISULFIDE CORE DOMAIN PROTEIN 2"/>
    <property type="match status" value="1"/>
</dbReference>
<dbReference type="PANTHER" id="PTHR19441">
    <property type="entry name" value="WHEY ACDIC PROTEIN WAP"/>
    <property type="match status" value="1"/>
</dbReference>
<dbReference type="Pfam" id="PF00095">
    <property type="entry name" value="WAP"/>
    <property type="match status" value="2"/>
</dbReference>
<dbReference type="PRINTS" id="PR00003">
    <property type="entry name" value="4DISULPHCORE"/>
</dbReference>
<dbReference type="SMART" id="SM00217">
    <property type="entry name" value="WAP"/>
    <property type="match status" value="2"/>
</dbReference>
<dbReference type="SUPFAM" id="SSF57256">
    <property type="entry name" value="Elafin-like"/>
    <property type="match status" value="2"/>
</dbReference>
<dbReference type="PROSITE" id="PS51390">
    <property type="entry name" value="WAP"/>
    <property type="match status" value="2"/>
</dbReference>
<protein>
    <recommendedName>
        <fullName>WAP four-disulfide core domain protein 2</fullName>
    </recommendedName>
    <alternativeName>
        <fullName>WAP domain-containing protein HE4</fullName>
    </alternativeName>
</protein>
<reference key="1">
    <citation type="submission" date="2001-01" db="EMBL/GenBank/DDBJ databases">
        <title>Cloning of mouse HE4.</title>
        <authorList>
            <person name="Bingle C.D."/>
        </authorList>
    </citation>
    <scope>NUCLEOTIDE SEQUENCE [MRNA]</scope>
    <source>
        <strain>C57BL/6J</strain>
    </source>
</reference>
<reference key="2">
    <citation type="journal article" date="2005" name="Science">
        <title>The transcriptional landscape of the mammalian genome.</title>
        <authorList>
            <person name="Carninci P."/>
            <person name="Kasukawa T."/>
            <person name="Katayama S."/>
            <person name="Gough J."/>
            <person name="Frith M.C."/>
            <person name="Maeda N."/>
            <person name="Oyama R."/>
            <person name="Ravasi T."/>
            <person name="Lenhard B."/>
            <person name="Wells C."/>
            <person name="Kodzius R."/>
            <person name="Shimokawa K."/>
            <person name="Bajic V.B."/>
            <person name="Brenner S.E."/>
            <person name="Batalov S."/>
            <person name="Forrest A.R."/>
            <person name="Zavolan M."/>
            <person name="Davis M.J."/>
            <person name="Wilming L.G."/>
            <person name="Aidinis V."/>
            <person name="Allen J.E."/>
            <person name="Ambesi-Impiombato A."/>
            <person name="Apweiler R."/>
            <person name="Aturaliya R.N."/>
            <person name="Bailey T.L."/>
            <person name="Bansal M."/>
            <person name="Baxter L."/>
            <person name="Beisel K.W."/>
            <person name="Bersano T."/>
            <person name="Bono H."/>
            <person name="Chalk A.M."/>
            <person name="Chiu K.P."/>
            <person name="Choudhary V."/>
            <person name="Christoffels A."/>
            <person name="Clutterbuck D.R."/>
            <person name="Crowe M.L."/>
            <person name="Dalla E."/>
            <person name="Dalrymple B.P."/>
            <person name="de Bono B."/>
            <person name="Della Gatta G."/>
            <person name="di Bernardo D."/>
            <person name="Down T."/>
            <person name="Engstrom P."/>
            <person name="Fagiolini M."/>
            <person name="Faulkner G."/>
            <person name="Fletcher C.F."/>
            <person name="Fukushima T."/>
            <person name="Furuno M."/>
            <person name="Futaki S."/>
            <person name="Gariboldi M."/>
            <person name="Georgii-Hemming P."/>
            <person name="Gingeras T.R."/>
            <person name="Gojobori T."/>
            <person name="Green R.E."/>
            <person name="Gustincich S."/>
            <person name="Harbers M."/>
            <person name="Hayashi Y."/>
            <person name="Hensch T.K."/>
            <person name="Hirokawa N."/>
            <person name="Hill D."/>
            <person name="Huminiecki L."/>
            <person name="Iacono M."/>
            <person name="Ikeo K."/>
            <person name="Iwama A."/>
            <person name="Ishikawa T."/>
            <person name="Jakt M."/>
            <person name="Kanapin A."/>
            <person name="Katoh M."/>
            <person name="Kawasawa Y."/>
            <person name="Kelso J."/>
            <person name="Kitamura H."/>
            <person name="Kitano H."/>
            <person name="Kollias G."/>
            <person name="Krishnan S.P."/>
            <person name="Kruger A."/>
            <person name="Kummerfeld S.K."/>
            <person name="Kurochkin I.V."/>
            <person name="Lareau L.F."/>
            <person name="Lazarevic D."/>
            <person name="Lipovich L."/>
            <person name="Liu J."/>
            <person name="Liuni S."/>
            <person name="McWilliam S."/>
            <person name="Madan Babu M."/>
            <person name="Madera M."/>
            <person name="Marchionni L."/>
            <person name="Matsuda H."/>
            <person name="Matsuzawa S."/>
            <person name="Miki H."/>
            <person name="Mignone F."/>
            <person name="Miyake S."/>
            <person name="Morris K."/>
            <person name="Mottagui-Tabar S."/>
            <person name="Mulder N."/>
            <person name="Nakano N."/>
            <person name="Nakauchi H."/>
            <person name="Ng P."/>
            <person name="Nilsson R."/>
            <person name="Nishiguchi S."/>
            <person name="Nishikawa S."/>
            <person name="Nori F."/>
            <person name="Ohara O."/>
            <person name="Okazaki Y."/>
            <person name="Orlando V."/>
            <person name="Pang K.C."/>
            <person name="Pavan W.J."/>
            <person name="Pavesi G."/>
            <person name="Pesole G."/>
            <person name="Petrovsky N."/>
            <person name="Piazza S."/>
            <person name="Reed J."/>
            <person name="Reid J.F."/>
            <person name="Ring B.Z."/>
            <person name="Ringwald M."/>
            <person name="Rost B."/>
            <person name="Ruan Y."/>
            <person name="Salzberg S.L."/>
            <person name="Sandelin A."/>
            <person name="Schneider C."/>
            <person name="Schoenbach C."/>
            <person name="Sekiguchi K."/>
            <person name="Semple C.A."/>
            <person name="Seno S."/>
            <person name="Sessa L."/>
            <person name="Sheng Y."/>
            <person name="Shibata Y."/>
            <person name="Shimada H."/>
            <person name="Shimada K."/>
            <person name="Silva D."/>
            <person name="Sinclair B."/>
            <person name="Sperling S."/>
            <person name="Stupka E."/>
            <person name="Sugiura K."/>
            <person name="Sultana R."/>
            <person name="Takenaka Y."/>
            <person name="Taki K."/>
            <person name="Tammoja K."/>
            <person name="Tan S.L."/>
            <person name="Tang S."/>
            <person name="Taylor M.S."/>
            <person name="Tegner J."/>
            <person name="Teichmann S.A."/>
            <person name="Ueda H.R."/>
            <person name="van Nimwegen E."/>
            <person name="Verardo R."/>
            <person name="Wei C.L."/>
            <person name="Yagi K."/>
            <person name="Yamanishi H."/>
            <person name="Zabarovsky E."/>
            <person name="Zhu S."/>
            <person name="Zimmer A."/>
            <person name="Hide W."/>
            <person name="Bult C."/>
            <person name="Grimmond S.M."/>
            <person name="Teasdale R.D."/>
            <person name="Liu E.T."/>
            <person name="Brusic V."/>
            <person name="Quackenbush J."/>
            <person name="Wahlestedt C."/>
            <person name="Mattick J.S."/>
            <person name="Hume D.A."/>
            <person name="Kai C."/>
            <person name="Sasaki D."/>
            <person name="Tomaru Y."/>
            <person name="Fukuda S."/>
            <person name="Kanamori-Katayama M."/>
            <person name="Suzuki M."/>
            <person name="Aoki J."/>
            <person name="Arakawa T."/>
            <person name="Iida J."/>
            <person name="Imamura K."/>
            <person name="Itoh M."/>
            <person name="Kato T."/>
            <person name="Kawaji H."/>
            <person name="Kawagashira N."/>
            <person name="Kawashima T."/>
            <person name="Kojima M."/>
            <person name="Kondo S."/>
            <person name="Konno H."/>
            <person name="Nakano K."/>
            <person name="Ninomiya N."/>
            <person name="Nishio T."/>
            <person name="Okada M."/>
            <person name="Plessy C."/>
            <person name="Shibata K."/>
            <person name="Shiraki T."/>
            <person name="Suzuki S."/>
            <person name="Tagami M."/>
            <person name="Waki K."/>
            <person name="Watahiki A."/>
            <person name="Okamura-Oho Y."/>
            <person name="Suzuki H."/>
            <person name="Kawai J."/>
            <person name="Hayashizaki Y."/>
        </authorList>
    </citation>
    <scope>NUCLEOTIDE SEQUENCE [LARGE SCALE MRNA]</scope>
    <source>
        <strain>C57BL/6J</strain>
        <tissue>Placenta</tissue>
    </source>
</reference>
<reference key="3">
    <citation type="journal article" date="2010" name="Cell">
        <title>A tissue-specific atlas of mouse protein phosphorylation and expression.</title>
        <authorList>
            <person name="Huttlin E.L."/>
            <person name="Jedrychowski M.P."/>
            <person name="Elias J.E."/>
            <person name="Goswami T."/>
            <person name="Rad R."/>
            <person name="Beausoleil S.A."/>
            <person name="Villen J."/>
            <person name="Haas W."/>
            <person name="Sowa M.E."/>
            <person name="Gygi S.P."/>
        </authorList>
    </citation>
    <scope>IDENTIFICATION BY MASS SPECTROMETRY [LARGE SCALE ANALYSIS]</scope>
    <source>
        <tissue>Lung</tissue>
    </source>
</reference>
<feature type="signal peptide" evidence="2">
    <location>
        <begin position="1"/>
        <end position="25"/>
    </location>
</feature>
<feature type="chain" id="PRO_0000041371" description="WAP four-disulfide core domain protein 2">
    <location>
        <begin position="26"/>
        <end position="174"/>
    </location>
</feature>
<feature type="domain" description="WAP 1" evidence="3">
    <location>
        <begin position="29"/>
        <end position="74"/>
    </location>
</feature>
<feature type="domain" description="WAP 2" evidence="3">
    <location>
        <begin position="125"/>
        <end position="173"/>
    </location>
</feature>
<feature type="region of interest" description="Disordered" evidence="4">
    <location>
        <begin position="68"/>
        <end position="117"/>
    </location>
</feature>
<feature type="compositionally biased region" description="Polar residues" evidence="4">
    <location>
        <begin position="83"/>
        <end position="98"/>
    </location>
</feature>
<feature type="disulfide bond" evidence="3">
    <location>
        <begin position="36"/>
        <end position="62"/>
    </location>
</feature>
<feature type="disulfide bond" evidence="3">
    <location>
        <begin position="45"/>
        <end position="66"/>
    </location>
</feature>
<feature type="disulfide bond" evidence="3">
    <location>
        <begin position="49"/>
        <end position="61"/>
    </location>
</feature>
<feature type="disulfide bond" evidence="3">
    <location>
        <begin position="55"/>
        <end position="70"/>
    </location>
</feature>
<feature type="disulfide bond" evidence="3">
    <location>
        <begin position="132"/>
        <end position="160"/>
    </location>
</feature>
<feature type="disulfide bond" evidence="3">
    <location>
        <begin position="143"/>
        <end position="164"/>
    </location>
</feature>
<feature type="disulfide bond" evidence="3">
    <location>
        <begin position="147"/>
        <end position="159"/>
    </location>
</feature>
<feature type="disulfide bond" evidence="3">
    <location>
        <begin position="153"/>
        <end position="169"/>
    </location>
</feature>